<protein>
    <recommendedName>
        <fullName evidence="1">NADH-quinone oxidoreductase subunit D</fullName>
        <ecNumber evidence="1">7.1.1.-</ecNumber>
    </recommendedName>
    <alternativeName>
        <fullName evidence="1">NADH dehydrogenase I subunit D</fullName>
    </alternativeName>
    <alternativeName>
        <fullName evidence="1">NDH-1 subunit D</fullName>
    </alternativeName>
</protein>
<organism>
    <name type="scientific">Helicobacter hepaticus (strain ATCC 51449 / 3B1)</name>
    <dbReference type="NCBI Taxonomy" id="235279"/>
    <lineage>
        <taxon>Bacteria</taxon>
        <taxon>Pseudomonadati</taxon>
        <taxon>Campylobacterota</taxon>
        <taxon>Epsilonproteobacteria</taxon>
        <taxon>Campylobacterales</taxon>
        <taxon>Helicobacteraceae</taxon>
        <taxon>Helicobacter</taxon>
    </lineage>
</organism>
<accession>Q7VFS5</accession>
<evidence type="ECO:0000255" key="1">
    <source>
        <dbReference type="HAMAP-Rule" id="MF_01358"/>
    </source>
</evidence>
<reference key="1">
    <citation type="journal article" date="2003" name="Proc. Natl. Acad. Sci. U.S.A.">
        <title>The complete genome sequence of the carcinogenic bacterium Helicobacter hepaticus.</title>
        <authorList>
            <person name="Suerbaum S."/>
            <person name="Josenhans C."/>
            <person name="Sterzenbach T."/>
            <person name="Drescher B."/>
            <person name="Brandt P."/>
            <person name="Bell M."/>
            <person name="Droege M."/>
            <person name="Fartmann B."/>
            <person name="Fischer H.-P."/>
            <person name="Ge Z."/>
            <person name="Hoerster A."/>
            <person name="Holland R."/>
            <person name="Klein K."/>
            <person name="Koenig J."/>
            <person name="Macko L."/>
            <person name="Mendz G.L."/>
            <person name="Nyakatura G."/>
            <person name="Schauer D.B."/>
            <person name="Shen Z."/>
            <person name="Weber J."/>
            <person name="Frosch M."/>
            <person name="Fox J.G."/>
        </authorList>
    </citation>
    <scope>NUCLEOTIDE SEQUENCE [LARGE SCALE GENOMIC DNA]</scope>
    <source>
        <strain>ATCC 51449 / 3B1</strain>
    </source>
</reference>
<comment type="function">
    <text evidence="1">NDH-1 shuttles electrons from NADH, via FMN and iron-sulfur (Fe-S) centers, to quinones in the respiratory chain. The immediate electron acceptor for the enzyme in this species is believed to be ubiquinone. Couples the redox reaction to proton translocation (for every two electrons transferred, four hydrogen ions are translocated across the cytoplasmic membrane), and thus conserves the redox energy in a proton gradient.</text>
</comment>
<comment type="catalytic activity">
    <reaction evidence="1">
        <text>a quinone + NADH + 5 H(+)(in) = a quinol + NAD(+) + 4 H(+)(out)</text>
        <dbReference type="Rhea" id="RHEA:57888"/>
        <dbReference type="ChEBI" id="CHEBI:15378"/>
        <dbReference type="ChEBI" id="CHEBI:24646"/>
        <dbReference type="ChEBI" id="CHEBI:57540"/>
        <dbReference type="ChEBI" id="CHEBI:57945"/>
        <dbReference type="ChEBI" id="CHEBI:132124"/>
    </reaction>
</comment>
<comment type="subunit">
    <text evidence="1">NDH-1 is composed of 14 different subunits. Subunits NuoB, C, D, E, F, and G constitute the peripheral sector of the complex.</text>
</comment>
<comment type="subcellular location">
    <subcellularLocation>
        <location evidence="1">Cell inner membrane</location>
        <topology evidence="1">Peripheral membrane protein</topology>
        <orientation evidence="1">Cytoplasmic side</orientation>
    </subcellularLocation>
</comment>
<comment type="similarity">
    <text evidence="1">Belongs to the complex I 49 kDa subunit family.</text>
</comment>
<feature type="chain" id="PRO_0000371876" description="NADH-quinone oxidoreductase subunit D">
    <location>
        <begin position="1"/>
        <end position="409"/>
    </location>
</feature>
<proteinExistence type="inferred from homology"/>
<name>NUOD_HELHP</name>
<gene>
    <name evidence="1" type="primary">nuoD</name>
    <name type="ordered locus">HH_1600</name>
</gene>
<keyword id="KW-0997">Cell inner membrane</keyword>
<keyword id="KW-1003">Cell membrane</keyword>
<keyword id="KW-0472">Membrane</keyword>
<keyword id="KW-0520">NAD</keyword>
<keyword id="KW-0874">Quinone</keyword>
<keyword id="KW-1185">Reference proteome</keyword>
<keyword id="KW-1278">Translocase</keyword>
<keyword id="KW-0813">Transport</keyword>
<keyword id="KW-0830">Ubiquinone</keyword>
<dbReference type="EC" id="7.1.1.-" evidence="1"/>
<dbReference type="EMBL" id="AE017125">
    <property type="protein sequence ID" value="AAP78197.1"/>
    <property type="molecule type" value="Genomic_DNA"/>
</dbReference>
<dbReference type="RefSeq" id="WP_011116440.1">
    <property type="nucleotide sequence ID" value="NC_004917.1"/>
</dbReference>
<dbReference type="SMR" id="Q7VFS5"/>
<dbReference type="STRING" id="235279.HH_1600"/>
<dbReference type="KEGG" id="hhe:HH_1600"/>
<dbReference type="eggNOG" id="COG0649">
    <property type="taxonomic scope" value="Bacteria"/>
</dbReference>
<dbReference type="HOGENOM" id="CLU_015134_1_2_7"/>
<dbReference type="OrthoDB" id="9801496at2"/>
<dbReference type="Proteomes" id="UP000002495">
    <property type="component" value="Chromosome"/>
</dbReference>
<dbReference type="GO" id="GO:0005886">
    <property type="term" value="C:plasma membrane"/>
    <property type="evidence" value="ECO:0007669"/>
    <property type="project" value="UniProtKB-SubCell"/>
</dbReference>
<dbReference type="GO" id="GO:0051287">
    <property type="term" value="F:NAD binding"/>
    <property type="evidence" value="ECO:0007669"/>
    <property type="project" value="InterPro"/>
</dbReference>
<dbReference type="GO" id="GO:0050136">
    <property type="term" value="F:NADH:ubiquinone reductase (non-electrogenic) activity"/>
    <property type="evidence" value="ECO:0007669"/>
    <property type="project" value="UniProtKB-UniRule"/>
</dbReference>
<dbReference type="GO" id="GO:0048038">
    <property type="term" value="F:quinone binding"/>
    <property type="evidence" value="ECO:0007669"/>
    <property type="project" value="UniProtKB-KW"/>
</dbReference>
<dbReference type="Gene3D" id="1.10.645.10">
    <property type="entry name" value="Cytochrome-c3 Hydrogenase, chain B"/>
    <property type="match status" value="1"/>
</dbReference>
<dbReference type="HAMAP" id="MF_01358">
    <property type="entry name" value="NDH1_NuoD"/>
    <property type="match status" value="1"/>
</dbReference>
<dbReference type="InterPro" id="IPR001135">
    <property type="entry name" value="NADH_Q_OxRdtase_suD"/>
</dbReference>
<dbReference type="InterPro" id="IPR022885">
    <property type="entry name" value="NDH1_su_D/H"/>
</dbReference>
<dbReference type="InterPro" id="IPR029014">
    <property type="entry name" value="NiFe-Hase_large"/>
</dbReference>
<dbReference type="NCBIfam" id="TIGR01962">
    <property type="entry name" value="NuoD"/>
    <property type="match status" value="1"/>
</dbReference>
<dbReference type="NCBIfam" id="NF004739">
    <property type="entry name" value="PRK06075.1"/>
    <property type="match status" value="1"/>
</dbReference>
<dbReference type="PANTHER" id="PTHR11993:SF10">
    <property type="entry name" value="NADH DEHYDROGENASE [UBIQUINONE] IRON-SULFUR PROTEIN 2, MITOCHONDRIAL"/>
    <property type="match status" value="1"/>
</dbReference>
<dbReference type="PANTHER" id="PTHR11993">
    <property type="entry name" value="NADH-UBIQUINONE OXIDOREDUCTASE 49 KDA SUBUNIT"/>
    <property type="match status" value="1"/>
</dbReference>
<dbReference type="Pfam" id="PF00346">
    <property type="entry name" value="Complex1_49kDa"/>
    <property type="match status" value="1"/>
</dbReference>
<dbReference type="SUPFAM" id="SSF56762">
    <property type="entry name" value="HydB/Nqo4-like"/>
    <property type="match status" value="1"/>
</dbReference>
<sequence>MKQNYTKLKPNFENIFFEQENDKMILNFGPQHPSAHGQLRLILELENEKIIKATPDIGYLHRGIEKMAENMIYNEFMPTTDRLDYIAATSNNYAFALGVEKLIGVDIPLRAQVIRTMLLEINRIISHIFLLGVQGMDVGALSIFLYCFIEREYGLDLMEDYCGARLTHNAIRIGGVPLDLPHNFLESVEKFTHSVPKTLDLVRGLLDKNRIWRIRLENVGYISQDFAKQWSLSGIMARGSGIKWDIRKHNPYELYSELDFEVPIATEGDCYARYQLYIEEIYESLKIIKQLIAMYPSTPKEIMAKDARYISAPKEDIMTQNYSLMQHFVLVTQGMRPPVGEVYVPTESPKGELGFFINSQGAPSPHRLKIRTPSFYHIGVLQELLIGHYFADIPAILASTNVVFGEIDR</sequence>